<evidence type="ECO:0000255" key="1">
    <source>
        <dbReference type="HAMAP-Rule" id="MF_03119"/>
    </source>
</evidence>
<sequence length="356" mass="39247">MSLQAIVYEDNKLSVLDQLLLPHEHKYIPIKSVEDAYSVIKNMQVRGAPAIAIVAALAVAVSLVNVKTDDLRNYVIESFERLKQSRPTAVNLFQIAYKMRKLAEAYEGEEIRVVVVKEAEDLLARDLRDNHTIGELGSEYVLKLVNKPRLTILTHCNTGSLATSGYGTALGIIRSLNEKGAIERVYCTETRPNNQGSRLTAYELLYDNIASTLITDSTAASIMPKIDAVIVGCDRVARNGDTANKIGTLSLAILAKHFNVPFIVAGPSFSIDMTLPDGEQTKIEERPSRELVMVRGPVVRDFTTHQFGARESVHIAPINVKAYCPVFDVTPADLISAVVTEKAVFTKGPNGYEFKW</sequence>
<name>MTNA_SCHJY</name>
<accession>B6K4Q2</accession>
<protein>
    <recommendedName>
        <fullName evidence="1">Methylthioribose-1-phosphate isomerase</fullName>
        <shortName evidence="1">M1Pi</shortName>
        <shortName evidence="1">MTR-1-P isomerase</shortName>
        <ecNumber evidence="1">5.3.1.23</ecNumber>
    </recommendedName>
    <alternativeName>
        <fullName evidence="1">S-methyl-5-thioribose-1-phosphate isomerase</fullName>
    </alternativeName>
    <alternativeName>
        <fullName evidence="1">Translation initiation factor eIF-2B subunit alpha/beta/delta-like protein</fullName>
    </alternativeName>
</protein>
<proteinExistence type="inferred from homology"/>
<gene>
    <name type="primary">mri1</name>
    <name type="ORF">SJAG_03614</name>
</gene>
<organism>
    <name type="scientific">Schizosaccharomyces japonicus (strain yFS275 / FY16936)</name>
    <name type="common">Fission yeast</name>
    <dbReference type="NCBI Taxonomy" id="402676"/>
    <lineage>
        <taxon>Eukaryota</taxon>
        <taxon>Fungi</taxon>
        <taxon>Dikarya</taxon>
        <taxon>Ascomycota</taxon>
        <taxon>Taphrinomycotina</taxon>
        <taxon>Schizosaccharomycetes</taxon>
        <taxon>Schizosaccharomycetales</taxon>
        <taxon>Schizosaccharomycetaceae</taxon>
        <taxon>Schizosaccharomyces</taxon>
    </lineage>
</organism>
<reference key="1">
    <citation type="journal article" date="2011" name="Science">
        <title>Comparative functional genomics of the fission yeasts.</title>
        <authorList>
            <person name="Rhind N."/>
            <person name="Chen Z."/>
            <person name="Yassour M."/>
            <person name="Thompson D.A."/>
            <person name="Haas B.J."/>
            <person name="Habib N."/>
            <person name="Wapinski I."/>
            <person name="Roy S."/>
            <person name="Lin M.F."/>
            <person name="Heiman D.I."/>
            <person name="Young S.K."/>
            <person name="Furuya K."/>
            <person name="Guo Y."/>
            <person name="Pidoux A."/>
            <person name="Chen H.M."/>
            <person name="Robbertse B."/>
            <person name="Goldberg J.M."/>
            <person name="Aoki K."/>
            <person name="Bayne E.H."/>
            <person name="Berlin A.M."/>
            <person name="Desjardins C.A."/>
            <person name="Dobbs E."/>
            <person name="Dukaj L."/>
            <person name="Fan L."/>
            <person name="FitzGerald M.G."/>
            <person name="French C."/>
            <person name="Gujja S."/>
            <person name="Hansen K."/>
            <person name="Keifenheim D."/>
            <person name="Levin J.Z."/>
            <person name="Mosher R.A."/>
            <person name="Mueller C.A."/>
            <person name="Pfiffner J."/>
            <person name="Priest M."/>
            <person name="Russ C."/>
            <person name="Smialowska A."/>
            <person name="Swoboda P."/>
            <person name="Sykes S.M."/>
            <person name="Vaughn M."/>
            <person name="Vengrova S."/>
            <person name="Yoder R."/>
            <person name="Zeng Q."/>
            <person name="Allshire R."/>
            <person name="Baulcombe D."/>
            <person name="Birren B.W."/>
            <person name="Brown W."/>
            <person name="Ekwall K."/>
            <person name="Kellis M."/>
            <person name="Leatherwood J."/>
            <person name="Levin H."/>
            <person name="Margalit H."/>
            <person name="Martienssen R."/>
            <person name="Nieduszynski C.A."/>
            <person name="Spatafora J.W."/>
            <person name="Friedman N."/>
            <person name="Dalgaard J.Z."/>
            <person name="Baumann P."/>
            <person name="Niki H."/>
            <person name="Regev A."/>
            <person name="Nusbaum C."/>
        </authorList>
    </citation>
    <scope>NUCLEOTIDE SEQUENCE [LARGE SCALE GENOMIC DNA]</scope>
    <source>
        <strain>yFS275 / FY16936</strain>
    </source>
</reference>
<comment type="function">
    <text evidence="1">Catalyzes the interconversion of methylthioribose-1-phosphate (MTR-1-P) into methylthioribulose-1-phosphate (MTRu-1-P).</text>
</comment>
<comment type="catalytic activity">
    <reaction evidence="1">
        <text>5-(methylsulfanyl)-alpha-D-ribose 1-phosphate = 5-(methylsulfanyl)-D-ribulose 1-phosphate</text>
        <dbReference type="Rhea" id="RHEA:19989"/>
        <dbReference type="ChEBI" id="CHEBI:58533"/>
        <dbReference type="ChEBI" id="CHEBI:58548"/>
        <dbReference type="EC" id="5.3.1.23"/>
    </reaction>
</comment>
<comment type="pathway">
    <text evidence="1">Amino-acid biosynthesis; L-methionine biosynthesis via salvage pathway; L-methionine from S-methyl-5-thio-alpha-D-ribose 1-phosphate: step 1/6.</text>
</comment>
<comment type="subcellular location">
    <subcellularLocation>
        <location evidence="1">Cytoplasm</location>
    </subcellularLocation>
    <subcellularLocation>
        <location evidence="1">Nucleus</location>
    </subcellularLocation>
</comment>
<comment type="similarity">
    <text evidence="1">Belongs to the eIF-2B alpha/beta/delta subunits family. MtnA subfamily.</text>
</comment>
<feature type="chain" id="PRO_0000402052" description="Methylthioribose-1-phosphate isomerase">
    <location>
        <begin position="1"/>
        <end position="356"/>
    </location>
</feature>
<feature type="active site" description="Proton donor" evidence="1">
    <location>
        <position position="234"/>
    </location>
</feature>
<feature type="site" description="Transition state stabilizer" evidence="1">
    <location>
        <position position="156"/>
    </location>
</feature>
<keyword id="KW-0028">Amino-acid biosynthesis</keyword>
<keyword id="KW-0963">Cytoplasm</keyword>
<keyword id="KW-0413">Isomerase</keyword>
<keyword id="KW-0486">Methionine biosynthesis</keyword>
<keyword id="KW-0539">Nucleus</keyword>
<keyword id="KW-1185">Reference proteome</keyword>
<dbReference type="EC" id="5.3.1.23" evidence="1"/>
<dbReference type="EMBL" id="KE651167">
    <property type="protein sequence ID" value="EEB08459.1"/>
    <property type="molecule type" value="Genomic_DNA"/>
</dbReference>
<dbReference type="RefSeq" id="XP_002174752.1">
    <property type="nucleotide sequence ID" value="XM_002174716.2"/>
</dbReference>
<dbReference type="SMR" id="B6K4Q2"/>
<dbReference type="STRING" id="402676.B6K4Q2"/>
<dbReference type="EnsemblFungi" id="EEB08459">
    <property type="protein sequence ID" value="EEB08459"/>
    <property type="gene ID" value="SJAG_03614"/>
</dbReference>
<dbReference type="GeneID" id="7051322"/>
<dbReference type="JaponicusDB" id="SJAG_03614">
    <property type="gene designation" value="mri1"/>
</dbReference>
<dbReference type="VEuPathDB" id="FungiDB:SJAG_03614"/>
<dbReference type="eggNOG" id="KOG1468">
    <property type="taxonomic scope" value="Eukaryota"/>
</dbReference>
<dbReference type="HOGENOM" id="CLU_016218_1_3_1"/>
<dbReference type="OMA" id="CETRPLN"/>
<dbReference type="OrthoDB" id="2461at2759"/>
<dbReference type="UniPathway" id="UPA00904">
    <property type="reaction ID" value="UER00874"/>
</dbReference>
<dbReference type="Proteomes" id="UP000001744">
    <property type="component" value="Unassembled WGS sequence"/>
</dbReference>
<dbReference type="GO" id="GO:0005737">
    <property type="term" value="C:cytoplasm"/>
    <property type="evidence" value="ECO:0007669"/>
    <property type="project" value="UniProtKB-SubCell"/>
</dbReference>
<dbReference type="GO" id="GO:0005634">
    <property type="term" value="C:nucleus"/>
    <property type="evidence" value="ECO:0007669"/>
    <property type="project" value="UniProtKB-SubCell"/>
</dbReference>
<dbReference type="GO" id="GO:0046523">
    <property type="term" value="F:S-methyl-5-thioribose-1-phosphate isomerase activity"/>
    <property type="evidence" value="ECO:0000318"/>
    <property type="project" value="GO_Central"/>
</dbReference>
<dbReference type="GO" id="GO:0019509">
    <property type="term" value="P:L-methionine salvage from methylthioadenosine"/>
    <property type="evidence" value="ECO:0000318"/>
    <property type="project" value="GO_Central"/>
</dbReference>
<dbReference type="FunFam" id="1.20.120.420:FF:000003">
    <property type="entry name" value="Methylthioribose-1-phosphate isomerase"/>
    <property type="match status" value="1"/>
</dbReference>
<dbReference type="FunFam" id="3.40.50.10470:FF:000006">
    <property type="entry name" value="Methylthioribose-1-phosphate isomerase"/>
    <property type="match status" value="1"/>
</dbReference>
<dbReference type="Gene3D" id="1.20.120.420">
    <property type="entry name" value="translation initiation factor eif-2b, domain 1"/>
    <property type="match status" value="1"/>
</dbReference>
<dbReference type="Gene3D" id="3.40.50.10470">
    <property type="entry name" value="Translation initiation factor eif-2b, domain 2"/>
    <property type="match status" value="1"/>
</dbReference>
<dbReference type="HAMAP" id="MF_01678">
    <property type="entry name" value="Salvage_MtnA"/>
    <property type="match status" value="1"/>
</dbReference>
<dbReference type="InterPro" id="IPR000649">
    <property type="entry name" value="IF-2B-related"/>
</dbReference>
<dbReference type="InterPro" id="IPR005251">
    <property type="entry name" value="IF-M1Pi"/>
</dbReference>
<dbReference type="InterPro" id="IPR042529">
    <property type="entry name" value="IF_2B-like_C"/>
</dbReference>
<dbReference type="InterPro" id="IPR011559">
    <property type="entry name" value="Initiation_fac_2B_a/b/d"/>
</dbReference>
<dbReference type="InterPro" id="IPR027363">
    <property type="entry name" value="M1Pi_N"/>
</dbReference>
<dbReference type="InterPro" id="IPR037171">
    <property type="entry name" value="NagB/RpiA_transferase-like"/>
</dbReference>
<dbReference type="NCBIfam" id="TIGR00524">
    <property type="entry name" value="eIF-2B_rel"/>
    <property type="match status" value="1"/>
</dbReference>
<dbReference type="NCBIfam" id="NF004326">
    <property type="entry name" value="PRK05720.1"/>
    <property type="match status" value="1"/>
</dbReference>
<dbReference type="NCBIfam" id="TIGR00512">
    <property type="entry name" value="salvage_mtnA"/>
    <property type="match status" value="1"/>
</dbReference>
<dbReference type="PANTHER" id="PTHR43475">
    <property type="entry name" value="METHYLTHIORIBOSE-1-PHOSPHATE ISOMERASE"/>
    <property type="match status" value="1"/>
</dbReference>
<dbReference type="PANTHER" id="PTHR43475:SF1">
    <property type="entry name" value="METHYLTHIORIBOSE-1-PHOSPHATE ISOMERASE"/>
    <property type="match status" value="1"/>
</dbReference>
<dbReference type="Pfam" id="PF01008">
    <property type="entry name" value="IF-2B"/>
    <property type="match status" value="1"/>
</dbReference>
<dbReference type="SUPFAM" id="SSF100950">
    <property type="entry name" value="NagB/RpiA/CoA transferase-like"/>
    <property type="match status" value="1"/>
</dbReference>